<accession>P08715</accession>
<gene>
    <name evidence="11" type="primary">hlyA</name>
</gene>
<name>HLYAP_ECOLX</name>
<protein>
    <recommendedName>
        <fullName evidence="12">Hemolysin, plasmid</fullName>
    </recommendedName>
</protein>
<keyword id="KW-0106">Calcium</keyword>
<keyword id="KW-0204">Cytolysis</keyword>
<keyword id="KW-0354">Hemolysis</keyword>
<keyword id="KW-1032">Host cell membrane</keyword>
<keyword id="KW-1043">Host membrane</keyword>
<keyword id="KW-0449">Lipoprotein</keyword>
<keyword id="KW-0472">Membrane</keyword>
<keyword id="KW-0519">Myristate</keyword>
<keyword id="KW-0614">Plasmid</keyword>
<keyword id="KW-0677">Repeat</keyword>
<keyword id="KW-0964">Secreted</keyword>
<keyword id="KW-0800">Toxin</keyword>
<keyword id="KW-0812">Transmembrane</keyword>
<keyword id="KW-1133">Transmembrane helix</keyword>
<keyword id="KW-0843">Virulence</keyword>
<reference key="1">
    <citation type="journal article" date="1986" name="FEMS Microbiol. Lett.">
        <title>Nucleotide sequence of a plasmid-encoded hemolysin determinant and its comparison with a corresponding chromosomal hemolysin sequence.</title>
        <authorList>
            <person name="Hess J."/>
            <person name="Wels W."/>
            <person name="Vogel M."/>
            <person name="Goebel W."/>
        </authorList>
    </citation>
    <scope>NUCLEOTIDE SEQUENCE [GENOMIC DNA]</scope>
</reference>
<reference key="2">
    <citation type="journal article" date="1990" name="Infect. Immun.">
        <title>Effects of Escherichia coli hemolysin on endothelial cell function.</title>
        <authorList>
            <person name="Suttorp N."/>
            <person name="Floeer B."/>
            <person name="Schnittler H."/>
            <person name="Seeger W."/>
            <person name="Bhakdi S."/>
        </authorList>
    </citation>
    <scope>FUNCTION</scope>
    <scope>SUBCELLULAR LOCATION</scope>
</reference>
<reference key="3">
    <citation type="journal article" date="1994" name="Science">
        <title>Fatty acylation of two internal lysine residues required for the toxic activity of Escherichia coli hemolysin.</title>
        <authorList>
            <person name="Stanley P."/>
            <person name="Packman L.C."/>
            <person name="Koronakis V."/>
            <person name="Hughes C."/>
        </authorList>
    </citation>
    <scope>MYRISTOYLATION AT LYS-564 AND LYS-690</scope>
</reference>
<reference key="4">
    <citation type="journal article" date="1996" name="J. Bacteriol.">
        <title>Analysis of the in vivo activation of hemolysin (HlyA) from Escherichia coli.</title>
        <authorList>
            <person name="Ludwig A."/>
            <person name="Garcia F."/>
            <person name="Bauer S."/>
            <person name="Jarchau T."/>
            <person name="Benz R."/>
            <person name="Hoppe J."/>
            <person name="Goebel W."/>
        </authorList>
    </citation>
    <scope>MYRISTOYLATION AT LYS-564 AND LYS-690</scope>
</reference>
<reference key="5">
    <citation type="journal article" date="2000" name="J. Biol. Chem.">
        <title>Escherichia coli alpha-hemolysin (HlyA) is heterogeneously acylated in vivo with 14-, 15-, and 17-carbon fatty acids.</title>
        <authorList>
            <person name="Lim K.B."/>
            <person name="Walker C.R."/>
            <person name="Guo L."/>
            <person name="Pellett S."/>
            <person name="Shabanowitz J."/>
            <person name="Hunt D.F."/>
            <person name="Hewlett E.L."/>
            <person name="Ludwig A."/>
            <person name="Goebel W."/>
            <person name="Welch R.A."/>
            <person name="Hackett M."/>
        </authorList>
    </citation>
    <scope>MYRISTOYLATION AT LYS-564 AND LYS-690</scope>
    <source>
        <plasmid>IncI2 pHLY152</plasmid>
    </source>
</reference>
<reference key="6">
    <citation type="journal article" date="2003" name="Chem. Phys. Lipids">
        <title>Acyl chains are responsible for the irreversibility in the Escherichia coli alpha-hemolysin binding to membranes.</title>
        <authorList>
            <person name="Herlax V."/>
            <person name="Bakas L."/>
        </authorList>
    </citation>
    <scope>SUBCELLULAR LOCATION</scope>
    <scope>MYRISTOYLATION</scope>
</reference>
<reference key="7">
    <citation type="journal article" date="2004" name="Biochemistry">
        <title>Activation of hemolysin toxin: relationship between two internal protein sites of acylation.</title>
        <authorList>
            <person name="Langston K.G."/>
            <person name="Worsham L.M."/>
            <person name="Earls L."/>
            <person name="Ernst-Fonberg M.L."/>
        </authorList>
    </citation>
    <scope>MYRISTOYLATION AT LYS-564 AND LYS-690</scope>
    <scope>MUTAGENESIS OF LYS-564 AND LYS-690</scope>
    <source>
        <plasmid>IncI2 pHLY152</plasmid>
    </source>
</reference>
<reference key="8">
    <citation type="journal article" date="2020" name="J. Biol. Chem.">
        <title>Acyltransferase-mediated selection of the length of the fatty acyl chain and of the acylation site governs activation of bacterial RTX toxins.</title>
        <authorList>
            <person name="Osickova A."/>
            <person name="Khaliq H."/>
            <person name="Masin J."/>
            <person name="Jurnecka D."/>
            <person name="Sukova A."/>
            <person name="Fiser R."/>
            <person name="Holubova J."/>
            <person name="Stanek O."/>
            <person name="Sebo P."/>
            <person name="Osicka R."/>
        </authorList>
    </citation>
    <scope>MYRISTOYLATION AT LYS-564 AND LYS-690</scope>
</reference>
<organism>
    <name type="scientific">Escherichia coli</name>
    <dbReference type="NCBI Taxonomy" id="562"/>
    <lineage>
        <taxon>Bacteria</taxon>
        <taxon>Pseudomonadati</taxon>
        <taxon>Pseudomonadota</taxon>
        <taxon>Gammaproteobacteria</taxon>
        <taxon>Enterobacterales</taxon>
        <taxon>Enterobacteriaceae</taxon>
        <taxon>Escherichia</taxon>
    </lineage>
</organism>
<feature type="chain" id="PRO_0000196214" description="Hemolysin, plasmid">
    <location>
        <begin position="1"/>
        <end position="1024"/>
    </location>
</feature>
<feature type="transmembrane region" description="Helical" evidence="2">
    <location>
        <begin position="238"/>
        <end position="260"/>
    </location>
</feature>
<feature type="transmembrane region" description="Helical" evidence="2">
    <location>
        <begin position="268"/>
        <end position="327"/>
    </location>
</feature>
<feature type="transmembrane region" description="Helical" evidence="2">
    <location>
        <begin position="365"/>
        <end position="411"/>
    </location>
</feature>
<feature type="repeat" description="Hemolysin-type calcium-binding 1">
    <location>
        <begin position="732"/>
        <end position="749"/>
    </location>
</feature>
<feature type="repeat" description="Hemolysin-type calcium-binding 2">
    <location>
        <begin position="750"/>
        <end position="767"/>
    </location>
</feature>
<feature type="repeat" description="Hemolysin-type calcium-binding 3">
    <location>
        <begin position="768"/>
        <end position="785"/>
    </location>
</feature>
<feature type="repeat" description="Hemolysin-type calcium-binding 4">
    <location>
        <begin position="786"/>
        <end position="803"/>
    </location>
</feature>
<feature type="repeat" description="Hemolysin-type calcium-binding 5">
    <location>
        <begin position="816"/>
        <end position="833"/>
    </location>
</feature>
<feature type="repeat" description="Hemolysin-type calcium-binding 6">
    <location>
        <begin position="834"/>
        <end position="851"/>
    </location>
</feature>
<feature type="region of interest" description="Disordered" evidence="3">
    <location>
        <begin position="20"/>
        <end position="39"/>
    </location>
</feature>
<feature type="compositionally biased region" description="Polar residues" evidence="3">
    <location>
        <begin position="20"/>
        <end position="32"/>
    </location>
</feature>
<feature type="lipid moiety-binding region" description="N6-myristoyl lysine" evidence="4 8 14 16 17">
    <location>
        <position position="564"/>
    </location>
</feature>
<feature type="lipid moiety-binding region" description="N6-myristoyl lysine" evidence="4 8 14 16 17">
    <location>
        <position position="690"/>
    </location>
</feature>
<feature type="mutagenesis site" description="Abolished acylation by HlyC and subsequent activation; when associated with A-690 or R-690." evidence="6">
    <original>K</original>
    <variation>R</variation>
    <variation>A</variation>
    <variation>C</variation>
    <location>
        <position position="564"/>
    </location>
</feature>
<feature type="mutagenesis site" description="Abolished acylation by HlyC and subsequent activation; when associated with A-564 or R-564." evidence="6">
    <original>K</original>
    <variation>R</variation>
    <variation>A</variation>
    <variation>C</variation>
    <location>
        <position position="690"/>
    </location>
</feature>
<proteinExistence type="evidence at protein level"/>
<geneLocation type="plasmid">
    <name>IncI2 pHLY152</name>
</geneLocation>
<comment type="function">
    <text evidence="7">Bacterial hemolysins are exotoxins that attack blood cell membranes and cause cell rupture by forming a pore.</text>
</comment>
<comment type="subcellular location">
    <subcellularLocation>
        <location evidence="1">Secreted</location>
    </subcellularLocation>
    <subcellularLocation>
        <location evidence="13 15">Host cell membrane</location>
        <topology evidence="15">Multi-pass membrane protein</topology>
    </subcellularLocation>
</comment>
<comment type="domain">
    <text>The Gly-rich region is probably involved in binding calcium, which is required for target cell-binding or cytolytic activity.</text>
</comment>
<comment type="domain">
    <text evidence="15">The three transmembrane domains are involved in pore formation by the cytotoxin.</text>
</comment>
<comment type="PTM">
    <text evidence="4 5 8 9 10">Myristoylated by HlyC; the toxin only becomes active when modified (PubMed:10978310, PubMed:32461253, PubMed:7801126, PubMed:8808931). Mainly myristoylated, while a minor fraction is acylated with pentadecanoyl (C15:0; 26%) and heptadecanoyl (C17:0; 6%) fatty acyl groups (PubMed:10978310). Fatty acylation is involved in binding to host membranes and promotes the irreversible insertion of Hemolysin into the host cell membrane (PubMed:12598051). Can be activated by both myristoylation and palmitoylation, but HlyC catalyzes lysine myristoylation (PubMed:32461253).</text>
</comment>
<comment type="miscellaneous">
    <text evidence="12">The hemolysin of E.coli is produced predominantly by strains causing extraintestinal infections, such as those of the urinary tract.</text>
</comment>
<comment type="similarity">
    <text evidence="12">Belongs to the RTX prokaryotic toxin (TC 1.C.11) family.</text>
</comment>
<dbReference type="EMBL" id="M14107">
    <property type="protein sequence ID" value="AAA98233.1"/>
    <property type="molecule type" value="Genomic_DNA"/>
</dbReference>
<dbReference type="PIR" id="S10056">
    <property type="entry name" value="S10056"/>
</dbReference>
<dbReference type="SASBDB" id="P08715"/>
<dbReference type="iPTMnet" id="P08715"/>
<dbReference type="GO" id="GO:0005576">
    <property type="term" value="C:extracellular region"/>
    <property type="evidence" value="ECO:0007669"/>
    <property type="project" value="UniProtKB-SubCell"/>
</dbReference>
<dbReference type="GO" id="GO:0020002">
    <property type="term" value="C:host cell plasma membrane"/>
    <property type="evidence" value="ECO:0007669"/>
    <property type="project" value="UniProtKB-SubCell"/>
</dbReference>
<dbReference type="GO" id="GO:0016020">
    <property type="term" value="C:membrane"/>
    <property type="evidence" value="ECO:0007669"/>
    <property type="project" value="UniProtKB-KW"/>
</dbReference>
<dbReference type="GO" id="GO:0005509">
    <property type="term" value="F:calcium ion binding"/>
    <property type="evidence" value="ECO:0007669"/>
    <property type="project" value="InterPro"/>
</dbReference>
<dbReference type="GO" id="GO:0015267">
    <property type="term" value="F:channel activity"/>
    <property type="evidence" value="ECO:0000314"/>
    <property type="project" value="UniProtKB"/>
</dbReference>
<dbReference type="GO" id="GO:0090729">
    <property type="term" value="F:toxin activity"/>
    <property type="evidence" value="ECO:0007669"/>
    <property type="project" value="UniProtKB-KW"/>
</dbReference>
<dbReference type="GO" id="GO:0044179">
    <property type="term" value="P:hemolysis in another organism"/>
    <property type="evidence" value="ECO:0000314"/>
    <property type="project" value="UniProtKB"/>
</dbReference>
<dbReference type="Gene3D" id="2.150.10.10">
    <property type="entry name" value="Serralysin-like metalloprotease, C-terminal"/>
    <property type="match status" value="3"/>
</dbReference>
<dbReference type="InterPro" id="IPR018511">
    <property type="entry name" value="Hemolysin-typ_Ca-bd_CS"/>
</dbReference>
<dbReference type="InterPro" id="IPR001343">
    <property type="entry name" value="Hemolysn_Ca-bd"/>
</dbReference>
<dbReference type="InterPro" id="IPR013550">
    <property type="entry name" value="RTX_C"/>
</dbReference>
<dbReference type="InterPro" id="IPR018504">
    <property type="entry name" value="RTX_pore_form"/>
</dbReference>
<dbReference type="InterPro" id="IPR050557">
    <property type="entry name" value="RTX_toxin/Mannuronan_C5-epim"/>
</dbReference>
<dbReference type="InterPro" id="IPR003995">
    <property type="entry name" value="RTX_toxin_determinant-A"/>
</dbReference>
<dbReference type="InterPro" id="IPR011049">
    <property type="entry name" value="Serralysin-like_metalloprot_C"/>
</dbReference>
<dbReference type="NCBIfam" id="NF033943">
    <property type="entry name" value="RTX_toxin"/>
    <property type="match status" value="1"/>
</dbReference>
<dbReference type="PANTHER" id="PTHR38340">
    <property type="entry name" value="S-LAYER PROTEIN"/>
    <property type="match status" value="1"/>
</dbReference>
<dbReference type="PANTHER" id="PTHR38340:SF1">
    <property type="entry name" value="S-LAYER PROTEIN"/>
    <property type="match status" value="1"/>
</dbReference>
<dbReference type="Pfam" id="PF00353">
    <property type="entry name" value="HemolysinCabind"/>
    <property type="match status" value="3"/>
</dbReference>
<dbReference type="Pfam" id="PF02382">
    <property type="entry name" value="RTX"/>
    <property type="match status" value="1"/>
</dbReference>
<dbReference type="Pfam" id="PF08339">
    <property type="entry name" value="RTX_C"/>
    <property type="match status" value="1"/>
</dbReference>
<dbReference type="PRINTS" id="PR00313">
    <property type="entry name" value="CABNDNGRPT"/>
</dbReference>
<dbReference type="PRINTS" id="PR01488">
    <property type="entry name" value="RTXTOXINA"/>
</dbReference>
<dbReference type="SUPFAM" id="SSF51120">
    <property type="entry name" value="beta-Roll"/>
    <property type="match status" value="1"/>
</dbReference>
<dbReference type="PROSITE" id="PS00330">
    <property type="entry name" value="HEMOLYSIN_CALCIUM"/>
    <property type="match status" value="4"/>
</dbReference>
<sequence>MTTITTAQIKSTLQSAKQSAANKLHSAGQSTKDALKKAAEQTRNAGNRLILLIPKDYKGQGSSLNDLVRTADELGIEVQYDEKNGTAITKQVFGTAEKLIGLTERGVTIFAPQLDKLLQKYQKAGNILGGGAENIGDNLGKAGGILSTFQNFLGTALSSMKIDELIKKQKSGGNVSSSELAKASIELINQLVDTVASLNNNVNSFSQQLNTLGSVLSNTKHLNGVGNKLQNLPNLDNIGAGLDTVSGILSAISASFILSNADADTRTKAAAGVELTTKVLGNVGKGISQYIIAQRAAQGLSTSAAAAGLIASAVTLAISPLSFLSIADKFKRANKIEEYSQRFKKLGYDGDSLLAAFHKETGAIDASLTTISTVLASVSSGISAAATTSLVGAPVSALVGAVTGIISGILEASKQAMFEHVASKMADVIAEWEKKHGKNYFENGYDARHAAFLEDNFKILSQYNKEYSVERSVLITQQHWDTLIGELAGVTRNGDKTLSGKSYIDYYEEGKRLEKKXDEFQKQVFDPLKGNIDLSDSKSSTLLKFVTPLLTPGEEIRERRQSGKYEYITELLVKGVDKWTVKGVQDKGAVYDYSNLIQHASVGNNQYREIRIESHLGDGDDKVFLSAGSANIYAGKGHDVVYYDKTDTGYLTIDGTKATEAGNYTVTRVLGGDVKVLQEVVKEQEVSVGKRTEKTQYRSYEFTHINGKNLTETDNLYSVEELIGTTRADKFFGSKFTDIFHGADGDDLIEGNDGNDRLYGDKGNDTLSGGNGDDQLYGGDGNDKLIGVAGNNYLNGGDGDDEFQVQGNSLAKNVLFGGKGNDKLYGSEGADLLDGGEGDDLLKGGYGNDIYRYLSGYGHHIIDDDGGKEDKLSLADIDFRDVAFKREGNDLIMYKGEGNVLSIGHKNGITFRNWFEKESGDISNHEIEQIFDKSGRIITPDSLKKALEYQQRNNKASYVYGNDALAYGSQGDLNPLINEISKIISAAGSFDVKEERTAASLLQLSGNASDFSYGRNSITLTTSA</sequence>
<evidence type="ECO:0000250" key="1">
    <source>
        <dbReference type="UniProtKB" id="P09983"/>
    </source>
</evidence>
<evidence type="ECO:0000255" key="2"/>
<evidence type="ECO:0000256" key="3">
    <source>
        <dbReference type="SAM" id="MobiDB-lite"/>
    </source>
</evidence>
<evidence type="ECO:0000269" key="4">
    <source>
    </source>
</evidence>
<evidence type="ECO:0000269" key="5">
    <source>
    </source>
</evidence>
<evidence type="ECO:0000269" key="6">
    <source>
    </source>
</evidence>
<evidence type="ECO:0000269" key="7">
    <source>
    </source>
</evidence>
<evidence type="ECO:0000269" key="8">
    <source>
    </source>
</evidence>
<evidence type="ECO:0000269" key="9">
    <source>
    </source>
</evidence>
<evidence type="ECO:0000269" key="10">
    <source>
    </source>
</evidence>
<evidence type="ECO:0000303" key="11">
    <source>
    </source>
</evidence>
<evidence type="ECO:0000305" key="12"/>
<evidence type="ECO:0000305" key="13">
    <source>
    </source>
</evidence>
<evidence type="ECO:0000305" key="14">
    <source>
    </source>
</evidence>
<evidence type="ECO:0000305" key="15">
    <source>
    </source>
</evidence>
<evidence type="ECO:0000305" key="16">
    <source>
    </source>
</evidence>
<evidence type="ECO:0000305" key="17">
    <source>
    </source>
</evidence>